<name>GMM_ECO57</name>
<evidence type="ECO:0000255" key="1">
    <source>
        <dbReference type="HAMAP-Rule" id="MF_00941"/>
    </source>
</evidence>
<evidence type="ECO:0000305" key="2"/>
<organism>
    <name type="scientific">Escherichia coli O157:H7</name>
    <dbReference type="NCBI Taxonomy" id="83334"/>
    <lineage>
        <taxon>Bacteria</taxon>
        <taxon>Pseudomonadati</taxon>
        <taxon>Pseudomonadota</taxon>
        <taxon>Gammaproteobacteria</taxon>
        <taxon>Enterobacterales</taxon>
        <taxon>Enterobacteriaceae</taxon>
        <taxon>Escherichia</taxon>
    </lineage>
</organism>
<keyword id="KW-0378">Hydrolase</keyword>
<keyword id="KW-0460">Magnesium</keyword>
<keyword id="KW-0479">Metal-binding</keyword>
<keyword id="KW-1185">Reference proteome</keyword>
<comment type="function">
    <text evidence="1">Hydrolyzes GDP-mannose.</text>
</comment>
<comment type="catalytic activity">
    <reaction evidence="1">
        <text>GDP-alpha-D-mannose + H2O = D-mannose + GDP + H(+)</text>
        <dbReference type="Rhea" id="RHEA:28102"/>
        <dbReference type="ChEBI" id="CHEBI:4208"/>
        <dbReference type="ChEBI" id="CHEBI:15377"/>
        <dbReference type="ChEBI" id="CHEBI:15378"/>
        <dbReference type="ChEBI" id="CHEBI:57527"/>
        <dbReference type="ChEBI" id="CHEBI:58189"/>
    </reaction>
</comment>
<comment type="cofactor">
    <cofactor evidence="1">
        <name>Mg(2+)</name>
        <dbReference type="ChEBI" id="CHEBI:18420"/>
    </cofactor>
    <text evidence="1">Binds 1 Mg(2+) ion per subunit.</text>
</comment>
<comment type="subunit">
    <text evidence="1">Homodimer.</text>
</comment>
<comment type="similarity">
    <text evidence="1">Belongs to the Nudix hydrolase family.</text>
</comment>
<comment type="sequence caution" evidence="2">
    <conflict type="erroneous initiation">
        <sequence resource="EMBL-CDS" id="AAG57111"/>
    </conflict>
    <text>Extended N-terminus.</text>
</comment>
<comment type="sequence caution" evidence="2">
    <conflict type="erroneous initiation">
        <sequence resource="EMBL-CDS" id="BAB36279"/>
    </conflict>
    <text>Extended N-terminus.</text>
</comment>
<protein>
    <recommendedName>
        <fullName evidence="1">GDP-mannose mannosyl hydrolase</fullName>
        <shortName evidence="1">GDPMH</shortName>
        <ecNumber evidence="1">3.6.1.-</ecNumber>
    </recommendedName>
</protein>
<dbReference type="EC" id="3.6.1.-" evidence="1"/>
<dbReference type="EMBL" id="AE005174">
    <property type="protein sequence ID" value="AAG57111.1"/>
    <property type="status" value="ALT_INIT"/>
    <property type="molecule type" value="Genomic_DNA"/>
</dbReference>
<dbReference type="EMBL" id="BA000007">
    <property type="protein sequence ID" value="BAB36279.1"/>
    <property type="status" value="ALT_INIT"/>
    <property type="molecule type" value="Genomic_DNA"/>
</dbReference>
<dbReference type="PIR" id="C85831">
    <property type="entry name" value="C85831"/>
</dbReference>
<dbReference type="PIR" id="H90985">
    <property type="entry name" value="H90985"/>
</dbReference>
<dbReference type="RefSeq" id="NP_310883.1">
    <property type="nucleotide sequence ID" value="NC_002695.1"/>
</dbReference>
<dbReference type="RefSeq" id="WP_000479838.1">
    <property type="nucleotide sequence ID" value="NZ_VOAI01000013.1"/>
</dbReference>
<dbReference type="SMR" id="P65552"/>
<dbReference type="STRING" id="155864.Z3215"/>
<dbReference type="KEGG" id="ece:Z3215"/>
<dbReference type="KEGG" id="ecs:ECs_2856"/>
<dbReference type="PATRIC" id="fig|386585.9.peg.2989"/>
<dbReference type="eggNOG" id="COG1051">
    <property type="taxonomic scope" value="Bacteria"/>
</dbReference>
<dbReference type="HOGENOM" id="CLU_037162_12_0_6"/>
<dbReference type="OMA" id="HDNSRAY"/>
<dbReference type="Proteomes" id="UP000000558">
    <property type="component" value="Chromosome"/>
</dbReference>
<dbReference type="Proteomes" id="UP000002519">
    <property type="component" value="Chromosome"/>
</dbReference>
<dbReference type="GO" id="GO:0008727">
    <property type="term" value="F:GDP-mannose mannosyl hydrolase activity"/>
    <property type="evidence" value="ECO:0007669"/>
    <property type="project" value="UniProtKB-UniRule"/>
</dbReference>
<dbReference type="GO" id="GO:0000287">
    <property type="term" value="F:magnesium ion binding"/>
    <property type="evidence" value="ECO:0007669"/>
    <property type="project" value="UniProtKB-UniRule"/>
</dbReference>
<dbReference type="GO" id="GO:0030145">
    <property type="term" value="F:manganese ion binding"/>
    <property type="evidence" value="ECO:0007669"/>
    <property type="project" value="InterPro"/>
</dbReference>
<dbReference type="CDD" id="cd03430">
    <property type="entry name" value="NUDIX_GDPMH_NudD"/>
    <property type="match status" value="1"/>
</dbReference>
<dbReference type="FunFam" id="3.90.79.10:FF:000064">
    <property type="entry name" value="GDP-mannose mannosyl hydrolase"/>
    <property type="match status" value="1"/>
</dbReference>
<dbReference type="Gene3D" id="3.90.79.10">
    <property type="entry name" value="Nucleoside Triphosphate Pyrophosphohydrolase"/>
    <property type="match status" value="1"/>
</dbReference>
<dbReference type="HAMAP" id="MF_00941">
    <property type="entry name" value="GDPMH_gmm"/>
    <property type="match status" value="1"/>
</dbReference>
<dbReference type="InterPro" id="IPR033715">
    <property type="entry name" value="GDPMH"/>
</dbReference>
<dbReference type="InterPro" id="IPR028613">
    <property type="entry name" value="GDPMH_Gmm"/>
</dbReference>
<dbReference type="InterPro" id="IPR015797">
    <property type="entry name" value="NUDIX_hydrolase-like_dom_sf"/>
</dbReference>
<dbReference type="InterPro" id="IPR020084">
    <property type="entry name" value="NUDIX_hydrolase_CS"/>
</dbReference>
<dbReference type="InterPro" id="IPR000086">
    <property type="entry name" value="NUDIX_hydrolase_dom"/>
</dbReference>
<dbReference type="NCBIfam" id="NF011963">
    <property type="entry name" value="PRK15434.1"/>
    <property type="match status" value="1"/>
</dbReference>
<dbReference type="PANTHER" id="PTHR43046">
    <property type="entry name" value="GDP-MANNOSE MANNOSYL HYDROLASE"/>
    <property type="match status" value="1"/>
</dbReference>
<dbReference type="PANTHER" id="PTHR43046:SF12">
    <property type="entry name" value="GDP-MANNOSE MANNOSYL HYDROLASE"/>
    <property type="match status" value="1"/>
</dbReference>
<dbReference type="Pfam" id="PF00293">
    <property type="entry name" value="NUDIX"/>
    <property type="match status" value="1"/>
</dbReference>
<dbReference type="PIRSF" id="PIRSF037599">
    <property type="entry name" value="GDPMH"/>
    <property type="match status" value="1"/>
</dbReference>
<dbReference type="SUPFAM" id="SSF55811">
    <property type="entry name" value="Nudix"/>
    <property type="match status" value="1"/>
</dbReference>
<dbReference type="PROSITE" id="PS51462">
    <property type="entry name" value="NUDIX"/>
    <property type="match status" value="1"/>
</dbReference>
<dbReference type="PROSITE" id="PS00893">
    <property type="entry name" value="NUDIX_BOX"/>
    <property type="match status" value="1"/>
</dbReference>
<sequence length="159" mass="18238">MFLRQEDFATVVRSTPLVSLDFIVENSRGEFLLGKRTNRPAQGYWFVPGGRVQKDETLEAAFERLTMAELGLRLPITAGQFYGVWQHFYDDNFSGTDFTTHYVVLGFRFRVAEEELLLPDEQHDDYRWLTPDALLASNDVHANSRAYFLAEKRAGVPGL</sequence>
<proteinExistence type="inferred from homology"/>
<reference key="1">
    <citation type="journal article" date="2001" name="Nature">
        <title>Genome sequence of enterohaemorrhagic Escherichia coli O157:H7.</title>
        <authorList>
            <person name="Perna N.T."/>
            <person name="Plunkett G. III"/>
            <person name="Burland V."/>
            <person name="Mau B."/>
            <person name="Glasner J.D."/>
            <person name="Rose D.J."/>
            <person name="Mayhew G.F."/>
            <person name="Evans P.S."/>
            <person name="Gregor J."/>
            <person name="Kirkpatrick H.A."/>
            <person name="Posfai G."/>
            <person name="Hackett J."/>
            <person name="Klink S."/>
            <person name="Boutin A."/>
            <person name="Shao Y."/>
            <person name="Miller L."/>
            <person name="Grotbeck E.J."/>
            <person name="Davis N.W."/>
            <person name="Lim A."/>
            <person name="Dimalanta E.T."/>
            <person name="Potamousis K."/>
            <person name="Apodaca J."/>
            <person name="Anantharaman T.S."/>
            <person name="Lin J."/>
            <person name="Yen G."/>
            <person name="Schwartz D.C."/>
            <person name="Welch R.A."/>
            <person name="Blattner F.R."/>
        </authorList>
    </citation>
    <scope>NUCLEOTIDE SEQUENCE [LARGE SCALE GENOMIC DNA]</scope>
    <source>
        <strain>O157:H7 / EDL933 / ATCC 700927 / EHEC</strain>
    </source>
</reference>
<reference key="2">
    <citation type="journal article" date="2001" name="DNA Res.">
        <title>Complete genome sequence of enterohemorrhagic Escherichia coli O157:H7 and genomic comparison with a laboratory strain K-12.</title>
        <authorList>
            <person name="Hayashi T."/>
            <person name="Makino K."/>
            <person name="Ohnishi M."/>
            <person name="Kurokawa K."/>
            <person name="Ishii K."/>
            <person name="Yokoyama K."/>
            <person name="Han C.-G."/>
            <person name="Ohtsubo E."/>
            <person name="Nakayama K."/>
            <person name="Murata T."/>
            <person name="Tanaka M."/>
            <person name="Tobe T."/>
            <person name="Iida T."/>
            <person name="Takami H."/>
            <person name="Honda T."/>
            <person name="Sasakawa C."/>
            <person name="Ogasawara N."/>
            <person name="Yasunaga T."/>
            <person name="Kuhara S."/>
            <person name="Shiba T."/>
            <person name="Hattori M."/>
            <person name="Shinagawa H."/>
        </authorList>
    </citation>
    <scope>NUCLEOTIDE SEQUENCE [LARGE SCALE GENOMIC DNA]</scope>
    <source>
        <strain>O157:H7 / Sakai / RIMD 0509952 / EHEC</strain>
    </source>
</reference>
<gene>
    <name evidence="1" type="primary">gmm</name>
    <name type="synonym">nudD</name>
    <name type="synonym">wcaH</name>
    <name type="ordered locus">Z3215</name>
    <name type="ordered locus">ECs2856</name>
</gene>
<feature type="chain" id="PRO_0000056984" description="GDP-mannose mannosyl hydrolase">
    <location>
        <begin position="1"/>
        <end position="159"/>
    </location>
</feature>
<feature type="domain" description="Nudix hydrolase" evidence="1">
    <location>
        <begin position="13"/>
        <end position="153"/>
    </location>
</feature>
<feature type="short sequence motif" description="Nudix box">
    <location>
        <begin position="50"/>
        <end position="71"/>
    </location>
</feature>
<feature type="binding site" evidence="1">
    <location>
        <begin position="2"/>
        <end position="3"/>
    </location>
    <ligand>
        <name>substrate</name>
    </ligand>
</feature>
<feature type="binding site" evidence="1">
    <location>
        <position position="8"/>
    </location>
    <ligand>
        <name>substrate</name>
    </ligand>
</feature>
<feature type="binding site" evidence="1">
    <location>
        <position position="36"/>
    </location>
    <ligand>
        <name>substrate</name>
    </ligand>
</feature>
<feature type="binding site" evidence="1">
    <location>
        <position position="49"/>
    </location>
    <ligand>
        <name>Mg(2+)</name>
        <dbReference type="ChEBI" id="CHEBI:18420"/>
    </ligand>
</feature>
<feature type="binding site" evidence="1">
    <location>
        <position position="69"/>
    </location>
    <ligand>
        <name>Mg(2+)</name>
        <dbReference type="ChEBI" id="CHEBI:18420"/>
    </ligand>
</feature>
<feature type="binding site" evidence="1">
    <location>
        <position position="122"/>
    </location>
    <ligand>
        <name>Mg(2+)</name>
        <dbReference type="ChEBI" id="CHEBI:18420"/>
    </ligand>
</feature>
<accession>P65552</accession>
<accession>Q8X7N1</accession>